<gene>
    <name type="primary">sphR</name>
    <name type="ordered locus">Synpcc7942_1012</name>
</gene>
<feature type="chain" id="PRO_0000081246" description="Alkaline phosphatase synthesis transcriptional regulatory protein SphR">
    <location>
        <begin position="1"/>
        <end position="257"/>
    </location>
</feature>
<feature type="domain" description="Response regulatory" evidence="1">
    <location>
        <begin position="25"/>
        <end position="148"/>
    </location>
</feature>
<feature type="DNA-binding region" description="OmpR/PhoB-type" evidence="2">
    <location>
        <begin position="159"/>
        <end position="257"/>
    </location>
</feature>
<feature type="modified residue" description="4-aspartylphosphate" evidence="1">
    <location>
        <position position="83"/>
    </location>
</feature>
<keyword id="KW-0010">Activator</keyword>
<keyword id="KW-0238">DNA-binding</keyword>
<keyword id="KW-0592">Phosphate transport</keyword>
<keyword id="KW-0597">Phosphoprotein</keyword>
<keyword id="KW-1185">Reference proteome</keyword>
<keyword id="KW-0804">Transcription</keyword>
<keyword id="KW-0805">Transcription regulation</keyword>
<keyword id="KW-0813">Transport</keyword>
<keyword id="KW-0902">Two-component regulatory system</keyword>
<proteinExistence type="evidence at protein level"/>
<accession>P39663</accession>
<accession>Q31PH7</accession>
<comment type="function">
    <text>Member of the two-component regulatory system SphR/SphS. Response regulator. Involved in inducible production of alkaline phosphatase in response to phosphate limitation as it is directly involved in the regulation of phoA transcription in response to phosphate limitation. Binds to two distinct sites upstream from the phoA promoter.</text>
</comment>
<comment type="PTM">
    <text>Phosphorylated by SphS.</text>
</comment>
<name>SPHR_SYNE7</name>
<reference key="1">
    <citation type="journal article" date="1993" name="Mol. Microbiol.">
        <title>Sensor and regulator proteins from the cyanobacterium Synechococcus species PCC7942 that belong to the bacterial signal-transduction protein families: implication in the adaptive response to phosphate limitation.</title>
        <authorList>
            <person name="Aiba H."/>
            <person name="Nagaya M."/>
            <person name="Mizuno T."/>
        </authorList>
    </citation>
    <scope>NUCLEOTIDE SEQUENCE [GENOMIC DNA]</scope>
</reference>
<reference key="2">
    <citation type="submission" date="2005-08" db="EMBL/GenBank/DDBJ databases">
        <title>Complete sequence of chromosome 1 of Synechococcus elongatus PCC 7942.</title>
        <authorList>
            <consortium name="US DOE Joint Genome Institute"/>
            <person name="Copeland A."/>
            <person name="Lucas S."/>
            <person name="Lapidus A."/>
            <person name="Barry K."/>
            <person name="Detter J.C."/>
            <person name="Glavina T."/>
            <person name="Hammon N."/>
            <person name="Israni S."/>
            <person name="Pitluck S."/>
            <person name="Schmutz J."/>
            <person name="Larimer F."/>
            <person name="Land M."/>
            <person name="Kyrpides N."/>
            <person name="Lykidis A."/>
            <person name="Golden S."/>
            <person name="Richardson P."/>
        </authorList>
    </citation>
    <scope>NUCLEOTIDE SEQUENCE [LARGE SCALE GENOMIC DNA]</scope>
    <source>
        <strain>ATCC 33912 / PCC 7942 / FACHB-805</strain>
    </source>
</reference>
<reference key="3">
    <citation type="journal article" date="1994" name="J. Bacteriol.">
        <title>The sphR product, a two-component system response regulator protein, regulates phosphate assimilation in Synechococcus sp. strain PCC 7942 by binding to two sites upstream from the phoA promoter.</title>
        <authorList>
            <person name="Nagaya M."/>
            <person name="Aiba H."/>
            <person name="Mizuno T."/>
        </authorList>
    </citation>
    <scope>CHARACTERIZATION</scope>
</reference>
<evidence type="ECO:0000255" key="1">
    <source>
        <dbReference type="PROSITE-ProRule" id="PRU00169"/>
    </source>
</evidence>
<evidence type="ECO:0000255" key="2">
    <source>
        <dbReference type="PROSITE-ProRule" id="PRU01091"/>
    </source>
</evidence>
<protein>
    <recommendedName>
        <fullName>Alkaline phosphatase synthesis transcriptional regulatory protein SphR</fullName>
    </recommendedName>
</protein>
<dbReference type="EMBL" id="D13172">
    <property type="protein sequence ID" value="BAA02453.1"/>
    <property type="molecule type" value="Genomic_DNA"/>
</dbReference>
<dbReference type="EMBL" id="CP000100">
    <property type="protein sequence ID" value="ABB57042.1"/>
    <property type="molecule type" value="Genomic_DNA"/>
</dbReference>
<dbReference type="PIR" id="S32931">
    <property type="entry name" value="S32931"/>
</dbReference>
<dbReference type="RefSeq" id="WP_011242845.1">
    <property type="nucleotide sequence ID" value="NZ_JACJTX010000003.1"/>
</dbReference>
<dbReference type="SMR" id="P39663"/>
<dbReference type="STRING" id="1140.Synpcc7942_1012"/>
<dbReference type="PaxDb" id="1140-Synpcc7942_1012"/>
<dbReference type="KEGG" id="syf:Synpcc7942_1012"/>
<dbReference type="eggNOG" id="COG0745">
    <property type="taxonomic scope" value="Bacteria"/>
</dbReference>
<dbReference type="HOGENOM" id="CLU_000445_30_4_3"/>
<dbReference type="OrthoDB" id="508982at2"/>
<dbReference type="BioCyc" id="SYNEL:SYNPCC7942_1012-MONOMER"/>
<dbReference type="Proteomes" id="UP000889800">
    <property type="component" value="Chromosome"/>
</dbReference>
<dbReference type="GO" id="GO:0005829">
    <property type="term" value="C:cytosol"/>
    <property type="evidence" value="ECO:0007669"/>
    <property type="project" value="TreeGrafter"/>
</dbReference>
<dbReference type="GO" id="GO:0032993">
    <property type="term" value="C:protein-DNA complex"/>
    <property type="evidence" value="ECO:0007669"/>
    <property type="project" value="TreeGrafter"/>
</dbReference>
<dbReference type="GO" id="GO:0000156">
    <property type="term" value="F:phosphorelay response regulator activity"/>
    <property type="evidence" value="ECO:0007669"/>
    <property type="project" value="TreeGrafter"/>
</dbReference>
<dbReference type="GO" id="GO:0000976">
    <property type="term" value="F:transcription cis-regulatory region binding"/>
    <property type="evidence" value="ECO:0007669"/>
    <property type="project" value="TreeGrafter"/>
</dbReference>
<dbReference type="GO" id="GO:0006817">
    <property type="term" value="P:phosphate ion transport"/>
    <property type="evidence" value="ECO:0007669"/>
    <property type="project" value="UniProtKB-KW"/>
</dbReference>
<dbReference type="GO" id="GO:0006355">
    <property type="term" value="P:regulation of DNA-templated transcription"/>
    <property type="evidence" value="ECO:0007669"/>
    <property type="project" value="InterPro"/>
</dbReference>
<dbReference type="CDD" id="cd17574">
    <property type="entry name" value="REC_OmpR"/>
    <property type="match status" value="1"/>
</dbReference>
<dbReference type="CDD" id="cd00383">
    <property type="entry name" value="trans_reg_C"/>
    <property type="match status" value="1"/>
</dbReference>
<dbReference type="FunFam" id="3.40.50.2300:FF:000001">
    <property type="entry name" value="DNA-binding response regulator PhoB"/>
    <property type="match status" value="1"/>
</dbReference>
<dbReference type="FunFam" id="1.10.10.10:FF:000018">
    <property type="entry name" value="DNA-binding response regulator ResD"/>
    <property type="match status" value="1"/>
</dbReference>
<dbReference type="Gene3D" id="3.40.50.2300">
    <property type="match status" value="1"/>
</dbReference>
<dbReference type="Gene3D" id="6.10.250.690">
    <property type="match status" value="1"/>
</dbReference>
<dbReference type="Gene3D" id="1.10.10.10">
    <property type="entry name" value="Winged helix-like DNA-binding domain superfamily/Winged helix DNA-binding domain"/>
    <property type="match status" value="1"/>
</dbReference>
<dbReference type="InterPro" id="IPR011006">
    <property type="entry name" value="CheY-like_superfamily"/>
</dbReference>
<dbReference type="InterPro" id="IPR001867">
    <property type="entry name" value="OmpR/PhoB-type_DNA-bd"/>
</dbReference>
<dbReference type="InterPro" id="IPR016032">
    <property type="entry name" value="Sig_transdc_resp-reg_C-effctor"/>
</dbReference>
<dbReference type="InterPro" id="IPR001789">
    <property type="entry name" value="Sig_transdc_resp-reg_receiver"/>
</dbReference>
<dbReference type="InterPro" id="IPR039420">
    <property type="entry name" value="WalR-like"/>
</dbReference>
<dbReference type="InterPro" id="IPR036388">
    <property type="entry name" value="WH-like_DNA-bd_sf"/>
</dbReference>
<dbReference type="PANTHER" id="PTHR48111:SF40">
    <property type="entry name" value="PHOSPHATE REGULON TRANSCRIPTIONAL REGULATORY PROTEIN PHOB"/>
    <property type="match status" value="1"/>
</dbReference>
<dbReference type="PANTHER" id="PTHR48111">
    <property type="entry name" value="REGULATOR OF RPOS"/>
    <property type="match status" value="1"/>
</dbReference>
<dbReference type="Pfam" id="PF00072">
    <property type="entry name" value="Response_reg"/>
    <property type="match status" value="1"/>
</dbReference>
<dbReference type="Pfam" id="PF00486">
    <property type="entry name" value="Trans_reg_C"/>
    <property type="match status" value="1"/>
</dbReference>
<dbReference type="SMART" id="SM00448">
    <property type="entry name" value="REC"/>
    <property type="match status" value="1"/>
</dbReference>
<dbReference type="SMART" id="SM00862">
    <property type="entry name" value="Trans_reg_C"/>
    <property type="match status" value="1"/>
</dbReference>
<dbReference type="SUPFAM" id="SSF46894">
    <property type="entry name" value="C-terminal effector domain of the bipartite response regulators"/>
    <property type="match status" value="1"/>
</dbReference>
<dbReference type="SUPFAM" id="SSF52172">
    <property type="entry name" value="CheY-like"/>
    <property type="match status" value="1"/>
</dbReference>
<dbReference type="PROSITE" id="PS51755">
    <property type="entry name" value="OMPR_PHOB"/>
    <property type="match status" value="1"/>
</dbReference>
<dbReference type="PROSITE" id="PS50110">
    <property type="entry name" value="RESPONSE_REGULATORY"/>
    <property type="match status" value="1"/>
</dbReference>
<organism>
    <name type="scientific">Synechococcus elongatus (strain ATCC 33912 / PCC 7942 / FACHB-805)</name>
    <name type="common">Anacystis nidulans R2</name>
    <dbReference type="NCBI Taxonomy" id="1140"/>
    <lineage>
        <taxon>Bacteria</taxon>
        <taxon>Bacillati</taxon>
        <taxon>Cyanobacteriota</taxon>
        <taxon>Cyanophyceae</taxon>
        <taxon>Synechococcales</taxon>
        <taxon>Synechococcaceae</taxon>
        <taxon>Synechococcus</taxon>
    </lineage>
</organism>
<sequence>MTSNPLDESMESLTVVPPAASPASRILVVEDEAVIRDMVALVLQQEGFTVDVAADGRTALNYFRSDSPEAGSVTENPDLVVLDLMLPAVNGLDFCRLLRRQGVTVPILMLSAKDTETDRVVGLEIGADDYLTKPFGTRELVARCRALLRRSQNQPAETPAVLRYEGLKLFPEECRVLLDDRELTLSPKEFRLLELFMRHPRRVWSRDQLLEKIWGIDFMGDSKTIDVHIRWLREKIEANPSNPSYLLTVRGFGYRLG</sequence>